<proteinExistence type="evidence at protein level"/>
<dbReference type="EMBL" id="AK055240">
    <property type="protein sequence ID" value="BAB70886.1"/>
    <property type="molecule type" value="mRNA"/>
</dbReference>
<dbReference type="EMBL" id="BX538112">
    <property type="protein sequence ID" value="CAD98024.1"/>
    <property type="molecule type" value="mRNA"/>
</dbReference>
<dbReference type="EMBL" id="AK290050">
    <property type="protein sequence ID" value="BAF82739.1"/>
    <property type="molecule type" value="mRNA"/>
</dbReference>
<dbReference type="EMBL" id="AL022160">
    <property type="status" value="NOT_ANNOTATED_CDS"/>
    <property type="molecule type" value="Genomic_DNA"/>
</dbReference>
<dbReference type="EMBL" id="AL035552">
    <property type="status" value="NOT_ANNOTATED_CDS"/>
    <property type="molecule type" value="Genomic_DNA"/>
</dbReference>
<dbReference type="EMBL" id="CH471104">
    <property type="protein sequence ID" value="EAW98572.1"/>
    <property type="molecule type" value="Genomic_DNA"/>
</dbReference>
<dbReference type="EMBL" id="CH471104">
    <property type="protein sequence ID" value="EAW98573.1"/>
    <property type="molecule type" value="Genomic_DNA"/>
</dbReference>
<dbReference type="EMBL" id="BC101720">
    <property type="protein sequence ID" value="AAI01721.1"/>
    <property type="molecule type" value="mRNA"/>
</dbReference>
<dbReference type="EMBL" id="BC101722">
    <property type="protein sequence ID" value="AAI01723.1"/>
    <property type="molecule type" value="mRNA"/>
</dbReference>
<dbReference type="EMBL" id="BC143522">
    <property type="protein sequence ID" value="AAI43523.1"/>
    <property type="molecule type" value="mRNA"/>
</dbReference>
<dbReference type="CCDS" id="CCDS35342.1">
    <molecule id="Q7Z353-1"/>
</dbReference>
<dbReference type="CCDS" id="CCDS55456.1">
    <molecule id="Q7Z353-2"/>
</dbReference>
<dbReference type="RefSeq" id="NP_001170949.1">
    <molecule id="Q7Z353-2"/>
    <property type="nucleotide sequence ID" value="NM_001177478.2"/>
</dbReference>
<dbReference type="RefSeq" id="NP_001170950.1">
    <molecule id="Q7Z353-1"/>
    <property type="nucleotide sequence ID" value="NM_001177479.2"/>
</dbReference>
<dbReference type="RefSeq" id="NP_653258.2">
    <molecule id="Q7Z353-1"/>
    <property type="nucleotide sequence ID" value="NM_144657.4"/>
</dbReference>
<dbReference type="RefSeq" id="XP_006724682.1">
    <property type="nucleotide sequence ID" value="XM_006724619.1"/>
</dbReference>
<dbReference type="RefSeq" id="XP_011529165.1">
    <molecule id="Q7Z353-1"/>
    <property type="nucleotide sequence ID" value="XM_011530863.3"/>
</dbReference>
<dbReference type="RefSeq" id="XP_011529166.1">
    <molecule id="Q7Z353-1"/>
    <property type="nucleotide sequence ID" value="XM_011530864.2"/>
</dbReference>
<dbReference type="RefSeq" id="XP_016884763.1">
    <molecule id="Q7Z353-1"/>
    <property type="nucleotide sequence ID" value="XM_017029274.2"/>
</dbReference>
<dbReference type="RefSeq" id="XP_054182447.1">
    <molecule id="Q7Z353-1"/>
    <property type="nucleotide sequence ID" value="XM_054326472.1"/>
</dbReference>
<dbReference type="RefSeq" id="XP_054182448.1">
    <molecule id="Q7Z353-1"/>
    <property type="nucleotide sequence ID" value="XM_054326473.1"/>
</dbReference>
<dbReference type="RefSeq" id="XP_054182449.1">
    <molecule id="Q7Z353-1"/>
    <property type="nucleotide sequence ID" value="XM_054326474.1"/>
</dbReference>
<dbReference type="PDB" id="2DA4">
    <property type="method" value="NMR"/>
    <property type="chains" value="A=435-501"/>
</dbReference>
<dbReference type="PDBsum" id="2DA4"/>
<dbReference type="SMR" id="Q7Z353"/>
<dbReference type="BioGRID" id="126559">
    <property type="interactions" value="29"/>
</dbReference>
<dbReference type="FunCoup" id="Q7Z353">
    <property type="interactions" value="211"/>
</dbReference>
<dbReference type="IntAct" id="Q7Z353">
    <property type="interactions" value="20"/>
</dbReference>
<dbReference type="STRING" id="9606.ENSP00000362272"/>
<dbReference type="GlyGen" id="Q7Z353">
    <property type="glycosylation" value="2 sites, 2 N-linked glycans (1 site)"/>
</dbReference>
<dbReference type="iPTMnet" id="Q7Z353"/>
<dbReference type="PhosphoSitePlus" id="Q7Z353"/>
<dbReference type="BioMuta" id="HDX"/>
<dbReference type="DMDM" id="74762426"/>
<dbReference type="jPOST" id="Q7Z353"/>
<dbReference type="MassIVE" id="Q7Z353"/>
<dbReference type="PaxDb" id="9606-ENSP00000297977"/>
<dbReference type="PeptideAtlas" id="Q7Z353"/>
<dbReference type="ProteomicsDB" id="69008">
    <molecule id="Q7Z353-1"/>
</dbReference>
<dbReference type="ProteomicsDB" id="69009">
    <molecule id="Q7Z353-2"/>
</dbReference>
<dbReference type="Antibodypedia" id="28380">
    <property type="antibodies" value="53 antibodies from 13 providers"/>
</dbReference>
<dbReference type="DNASU" id="139324"/>
<dbReference type="Ensembl" id="ENST00000297977.9">
    <molecule id="Q7Z353-1"/>
    <property type="protein sequence ID" value="ENSP00000297977.5"/>
    <property type="gene ID" value="ENSG00000165259.14"/>
</dbReference>
<dbReference type="Ensembl" id="ENST00000373177.3">
    <molecule id="Q7Z353-1"/>
    <property type="protein sequence ID" value="ENSP00000362272.2"/>
    <property type="gene ID" value="ENSG00000165259.14"/>
</dbReference>
<dbReference type="Ensembl" id="ENST00000506585.6">
    <molecule id="Q7Z353-2"/>
    <property type="protein sequence ID" value="ENSP00000423670.2"/>
    <property type="gene ID" value="ENSG00000165259.14"/>
</dbReference>
<dbReference type="GeneID" id="139324"/>
<dbReference type="KEGG" id="hsa:139324"/>
<dbReference type="MANE-Select" id="ENST00000373177.3">
    <property type="protein sequence ID" value="ENSP00000362272.2"/>
    <property type="RefSeq nucleotide sequence ID" value="NM_001177479.2"/>
    <property type="RefSeq protein sequence ID" value="NP_001170950.1"/>
</dbReference>
<dbReference type="UCSC" id="uc004eek.3">
    <molecule id="Q7Z353-1"/>
    <property type="organism name" value="human"/>
</dbReference>
<dbReference type="AGR" id="HGNC:26411"/>
<dbReference type="CTD" id="139324"/>
<dbReference type="DisGeNET" id="139324"/>
<dbReference type="GeneCards" id="HDX"/>
<dbReference type="HGNC" id="HGNC:26411">
    <property type="gene designation" value="HDX"/>
</dbReference>
<dbReference type="HPA" id="ENSG00000165259">
    <property type="expression patterns" value="Low tissue specificity"/>
</dbReference>
<dbReference type="MalaCards" id="HDX"/>
<dbReference type="MIM" id="300994">
    <property type="type" value="gene"/>
</dbReference>
<dbReference type="neXtProt" id="NX_Q7Z353"/>
<dbReference type="OpenTargets" id="ENSG00000165259"/>
<dbReference type="PharmGKB" id="PA162390630"/>
<dbReference type="VEuPathDB" id="HostDB:ENSG00000165259"/>
<dbReference type="eggNOG" id="ENOG502QPZG">
    <property type="taxonomic scope" value="Eukaryota"/>
</dbReference>
<dbReference type="GeneTree" id="ENSGT00390000008591"/>
<dbReference type="HOGENOM" id="CLU_025064_0_0_1"/>
<dbReference type="InParanoid" id="Q7Z353"/>
<dbReference type="OMA" id="QPCKIEP"/>
<dbReference type="OrthoDB" id="10055960at2759"/>
<dbReference type="PAN-GO" id="Q7Z353">
    <property type="GO annotations" value="3 GO annotations based on evolutionary models"/>
</dbReference>
<dbReference type="PhylomeDB" id="Q7Z353"/>
<dbReference type="TreeFam" id="TF330998"/>
<dbReference type="PathwayCommons" id="Q7Z353"/>
<dbReference type="SignaLink" id="Q7Z353"/>
<dbReference type="BioGRID-ORCS" id="139324">
    <property type="hits" value="12 hits in 799 CRISPR screens"/>
</dbReference>
<dbReference type="ChiTaRS" id="HDX">
    <property type="organism name" value="human"/>
</dbReference>
<dbReference type="EvolutionaryTrace" id="Q7Z353"/>
<dbReference type="GenomeRNAi" id="139324"/>
<dbReference type="Pharos" id="Q7Z353">
    <property type="development level" value="Tbio"/>
</dbReference>
<dbReference type="PRO" id="PR:Q7Z353"/>
<dbReference type="Proteomes" id="UP000005640">
    <property type="component" value="Chromosome X"/>
</dbReference>
<dbReference type="RNAct" id="Q7Z353">
    <property type="molecule type" value="protein"/>
</dbReference>
<dbReference type="Bgee" id="ENSG00000165259">
    <property type="expression patterns" value="Expressed in male germ line stem cell (sensu Vertebrata) in testis and 100 other cell types or tissues"/>
</dbReference>
<dbReference type="ExpressionAtlas" id="Q7Z353">
    <property type="expression patterns" value="baseline and differential"/>
</dbReference>
<dbReference type="GO" id="GO:0000785">
    <property type="term" value="C:chromatin"/>
    <property type="evidence" value="ECO:0000247"/>
    <property type="project" value="NTNU_SB"/>
</dbReference>
<dbReference type="GO" id="GO:0005634">
    <property type="term" value="C:nucleus"/>
    <property type="evidence" value="ECO:0007669"/>
    <property type="project" value="UniProtKB-SubCell"/>
</dbReference>
<dbReference type="GO" id="GO:0000981">
    <property type="term" value="F:DNA-binding transcription factor activity, RNA polymerase II-specific"/>
    <property type="evidence" value="ECO:0000247"/>
    <property type="project" value="NTNU_SB"/>
</dbReference>
<dbReference type="GO" id="GO:0000978">
    <property type="term" value="F:RNA polymerase II cis-regulatory region sequence-specific DNA binding"/>
    <property type="evidence" value="ECO:0000318"/>
    <property type="project" value="GO_Central"/>
</dbReference>
<dbReference type="GO" id="GO:0006357">
    <property type="term" value="P:regulation of transcription by RNA polymerase II"/>
    <property type="evidence" value="ECO:0000318"/>
    <property type="project" value="GO_Central"/>
</dbReference>
<dbReference type="CDD" id="cd00086">
    <property type="entry name" value="homeodomain"/>
    <property type="match status" value="2"/>
</dbReference>
<dbReference type="FunFam" id="1.10.10.60:FF:000244">
    <property type="entry name" value="Highly divergent homeobox"/>
    <property type="match status" value="1"/>
</dbReference>
<dbReference type="Gene3D" id="1.10.10.60">
    <property type="entry name" value="Homeodomain-like"/>
    <property type="match status" value="2"/>
</dbReference>
<dbReference type="InterPro" id="IPR001356">
    <property type="entry name" value="HD"/>
</dbReference>
<dbReference type="InterPro" id="IPR009057">
    <property type="entry name" value="Homeodomain-like_sf"/>
</dbReference>
<dbReference type="InterPro" id="IPR050255">
    <property type="entry name" value="POU_domain_TF"/>
</dbReference>
<dbReference type="PANTHER" id="PTHR11636:SF80">
    <property type="entry name" value="HIGHLY DIVERGENT HOMEOBOX"/>
    <property type="match status" value="1"/>
</dbReference>
<dbReference type="PANTHER" id="PTHR11636">
    <property type="entry name" value="POU DOMAIN"/>
    <property type="match status" value="1"/>
</dbReference>
<dbReference type="SMART" id="SM00389">
    <property type="entry name" value="HOX"/>
    <property type="match status" value="2"/>
</dbReference>
<dbReference type="SUPFAM" id="SSF46689">
    <property type="entry name" value="Homeodomain-like"/>
    <property type="match status" value="2"/>
</dbReference>
<dbReference type="PROSITE" id="PS50071">
    <property type="entry name" value="HOMEOBOX_2"/>
    <property type="match status" value="1"/>
</dbReference>
<evidence type="ECO:0000255" key="1">
    <source>
        <dbReference type="PROSITE-ProRule" id="PRU00108"/>
    </source>
</evidence>
<evidence type="ECO:0000256" key="2">
    <source>
        <dbReference type="SAM" id="MobiDB-lite"/>
    </source>
</evidence>
<evidence type="ECO:0000269" key="3">
    <source>
    </source>
</evidence>
<evidence type="ECO:0000269" key="4">
    <source>
    </source>
</evidence>
<evidence type="ECO:0000303" key="5">
    <source>
    </source>
</evidence>
<evidence type="ECO:0007744" key="6">
    <source>
    </source>
</evidence>
<evidence type="ECO:0007829" key="7">
    <source>
        <dbReference type="PDB" id="2DA4"/>
    </source>
</evidence>
<name>HDX_HUMAN</name>
<comment type="interaction">
    <interactant intactId="EBI-1052734">
        <id>Q7Z353</id>
    </interactant>
    <interactant intactId="EBI-1049556">
        <id>Q9Y3E2</id>
        <label>BOLA1</label>
    </interactant>
    <organismsDiffer>false</organismsDiffer>
    <experiments>3</experiments>
</comment>
<comment type="interaction">
    <interactant intactId="EBI-1052734">
        <id>Q7Z353</id>
    </interactant>
    <interactant intactId="EBI-12006120">
        <id>A0A087WZT3</id>
        <label>BOLA2-SMG1P6</label>
    </interactant>
    <organismsDiffer>false</organismsDiffer>
    <experiments>3</experiments>
</comment>
<comment type="interaction">
    <interactant intactId="EBI-1052734">
        <id>Q7Z353</id>
    </interactant>
    <interactant intactId="EBI-10961624">
        <id>Q2TAC2-2</id>
        <label>CCDC57</label>
    </interactant>
    <organismsDiffer>false</organismsDiffer>
    <experiments>3</experiments>
</comment>
<comment type="interaction">
    <interactant intactId="EBI-1052734">
        <id>Q7Z353</id>
    </interactant>
    <interactant intactId="EBI-11962928">
        <id>Q9UI47-2</id>
        <label>CTNNA3</label>
    </interactant>
    <organismsDiffer>false</organismsDiffer>
    <experiments>3</experiments>
</comment>
<comment type="interaction">
    <interactant intactId="EBI-1052734">
        <id>Q7Z353</id>
    </interactant>
    <interactant intactId="EBI-750641">
        <id>Q5TD97</id>
        <label>FHL5</label>
    </interactant>
    <organismsDiffer>false</organismsDiffer>
    <experiments>3</experiments>
</comment>
<comment type="interaction">
    <interactant intactId="EBI-1052734">
        <id>Q7Z353</id>
    </interactant>
    <interactant intactId="EBI-746252">
        <id>Q96CN9</id>
        <label>GCC1</label>
    </interactant>
    <organismsDiffer>false</organismsDiffer>
    <experiments>3</experiments>
</comment>
<comment type="interaction">
    <interactant intactId="EBI-1052734">
        <id>Q7Z353</id>
    </interactant>
    <interactant intactId="EBI-8639312">
        <id>P25800</id>
        <label>LMO1</label>
    </interactant>
    <organismsDiffer>false</organismsDiffer>
    <experiments>3</experiments>
</comment>
<comment type="interaction">
    <interactant intactId="EBI-1052734">
        <id>Q7Z353</id>
    </interactant>
    <interactant intactId="EBI-739832">
        <id>Q8TBB1</id>
        <label>LNX1</label>
    </interactant>
    <organismsDiffer>false</organismsDiffer>
    <experiments>3</experiments>
</comment>
<comment type="interaction">
    <interactant intactId="EBI-1052734">
        <id>Q7Z353</id>
    </interactant>
    <interactant intactId="EBI-10172526">
        <id>Q9UJV3-2</id>
        <label>MID2</label>
    </interactant>
    <organismsDiffer>false</organismsDiffer>
    <experiments>3</experiments>
</comment>
<comment type="interaction">
    <interactant intactId="EBI-1052734">
        <id>Q7Z353</id>
    </interactant>
    <interactant intactId="EBI-1055079">
        <id>O15160</id>
        <label>POLR1C</label>
    </interactant>
    <organismsDiffer>false</organismsDiffer>
    <experiments>3</experiments>
</comment>
<comment type="interaction">
    <interactant intactId="EBI-1052734">
        <id>Q7Z353</id>
    </interactant>
    <interactant intactId="EBI-743502">
        <id>Q8WWV3</id>
        <label>RTN4IP1</label>
    </interactant>
    <organismsDiffer>false</organismsDiffer>
    <experiments>3</experiments>
</comment>
<comment type="interaction">
    <interactant intactId="EBI-1052734">
        <id>Q7Z353</id>
    </interactant>
    <interactant intactId="EBI-740595">
        <id>Q9UMX1</id>
        <label>SUFU</label>
    </interactant>
    <organismsDiffer>false</organismsDiffer>
    <experiments>4</experiments>
</comment>
<comment type="interaction">
    <interactant intactId="EBI-1052734">
        <id>Q7Z353</id>
    </interactant>
    <interactant intactId="EBI-744794">
        <id>Q9BZW7</id>
        <label>TSGA10</label>
    </interactant>
    <organismsDiffer>false</organismsDiffer>
    <experiments>3</experiments>
</comment>
<comment type="interaction">
    <interactant intactId="EBI-1052734">
        <id>Q7Z353</id>
    </interactant>
    <interactant intactId="EBI-9526213">
        <id>Q8N0Z6</id>
        <label>TTC5</label>
    </interactant>
    <organismsDiffer>false</organismsDiffer>
    <experiments>3</experiments>
</comment>
<comment type="subcellular location">
    <subcellularLocation>
        <location evidence="1">Nucleus</location>
    </subcellularLocation>
</comment>
<comment type="alternative products">
    <event type="alternative splicing"/>
    <isoform>
        <id>Q7Z353-1</id>
        <name>1</name>
        <sequence type="displayed"/>
    </isoform>
    <isoform>
        <id>Q7Z353-2</id>
        <name>2</name>
        <sequence type="described" ref="VSP_027708"/>
    </isoform>
</comment>
<feature type="chain" id="PRO_0000299487" description="Highly divergent homeobox">
    <location>
        <begin position="1"/>
        <end position="690"/>
    </location>
</feature>
<feature type="DNA-binding region" description="Homeobox 1" evidence="1">
    <location>
        <begin position="3"/>
        <end position="63"/>
    </location>
</feature>
<feature type="DNA-binding region" description="Homeobox 2" evidence="1">
    <location>
        <begin position="435"/>
        <end position="498"/>
    </location>
</feature>
<feature type="region of interest" description="Disordered" evidence="2">
    <location>
        <begin position="55"/>
        <end position="76"/>
    </location>
</feature>
<feature type="region of interest" description="Disordered" evidence="2">
    <location>
        <begin position="112"/>
        <end position="132"/>
    </location>
</feature>
<feature type="region of interest" description="Disordered" evidence="2">
    <location>
        <begin position="501"/>
        <end position="539"/>
    </location>
</feature>
<feature type="region of interest" description="Disordered" evidence="2">
    <location>
        <begin position="664"/>
        <end position="690"/>
    </location>
</feature>
<feature type="compositionally biased region" description="Low complexity" evidence="2">
    <location>
        <begin position="64"/>
        <end position="76"/>
    </location>
</feature>
<feature type="compositionally biased region" description="Polar residues" evidence="2">
    <location>
        <begin position="113"/>
        <end position="123"/>
    </location>
</feature>
<feature type="compositionally biased region" description="Polar residues" evidence="2">
    <location>
        <begin position="674"/>
        <end position="690"/>
    </location>
</feature>
<feature type="cross-link" description="Glycyl lysine isopeptide (Lys-Gly) (interchain with G-Cter in SUMO2)" evidence="6">
    <location>
        <position position="135"/>
    </location>
</feature>
<feature type="cross-link" description="Glycyl lysine isopeptide (Lys-Gly) (interchain with G-Cter in SUMO2)" evidence="6">
    <location>
        <position position="140"/>
    </location>
</feature>
<feature type="cross-link" description="Glycyl lysine isopeptide (Lys-Gly) (interchain with G-Cter in SUMO2)" evidence="6">
    <location>
        <position position="144"/>
    </location>
</feature>
<feature type="cross-link" description="Glycyl lysine isopeptide (Lys-Gly) (interchain with G-Cter in SUMO2)" evidence="6">
    <location>
        <position position="163"/>
    </location>
</feature>
<feature type="cross-link" description="Glycyl lysine isopeptide (Lys-Gly) (interchain with G-Cter in SUMO2)" evidence="6">
    <location>
        <position position="172"/>
    </location>
</feature>
<feature type="cross-link" description="Glycyl lysine isopeptide (Lys-Gly) (interchain with G-Cter in SUMO2)" evidence="6">
    <location>
        <position position="194"/>
    </location>
</feature>
<feature type="cross-link" description="Glycyl lysine isopeptide (Lys-Gly) (interchain with G-Cter in SUMO2)" evidence="6">
    <location>
        <position position="212"/>
    </location>
</feature>
<feature type="cross-link" description="Glycyl lysine isopeptide (Lys-Gly) (interchain with G-Cter in SUMO2)" evidence="6">
    <location>
        <position position="221"/>
    </location>
</feature>
<feature type="cross-link" description="Glycyl lysine isopeptide (Lys-Gly) (interchain with G-Cter in SUMO2)" evidence="6">
    <location>
        <position position="232"/>
    </location>
</feature>
<feature type="cross-link" description="Glycyl lysine isopeptide (Lys-Gly) (interchain with G-Cter in SUMO2)" evidence="6">
    <location>
        <position position="613"/>
    </location>
</feature>
<feature type="splice variant" id="VSP_027708" description="In isoform 2." evidence="5">
    <location>
        <begin position="1"/>
        <end position="58"/>
    </location>
</feature>
<feature type="sequence variant" id="VAR_034827" description="In dbSNP:rs35653454.">
    <original>A</original>
    <variation>T</variation>
    <location>
        <position position="193"/>
    </location>
</feature>
<feature type="sequence variant" id="VAR_034828" description="In dbSNP:rs35161124." evidence="3 4">
    <original>F</original>
    <variation>S</variation>
    <location>
        <position position="397"/>
    </location>
</feature>
<feature type="helix" evidence="7">
    <location>
        <begin position="444"/>
        <end position="454"/>
    </location>
</feature>
<feature type="turn" evidence="7">
    <location>
        <begin position="455"/>
        <end position="459"/>
    </location>
</feature>
<feature type="helix" evidence="7">
    <location>
        <begin position="463"/>
        <end position="476"/>
    </location>
</feature>
<feature type="helix" evidence="7">
    <location>
        <begin position="480"/>
        <end position="497"/>
    </location>
</feature>
<keyword id="KW-0002">3D-structure</keyword>
<keyword id="KW-0025">Alternative splicing</keyword>
<keyword id="KW-0903">Direct protein sequencing</keyword>
<keyword id="KW-0238">DNA-binding</keyword>
<keyword id="KW-0371">Homeobox</keyword>
<keyword id="KW-1017">Isopeptide bond</keyword>
<keyword id="KW-0539">Nucleus</keyword>
<keyword id="KW-1267">Proteomics identification</keyword>
<keyword id="KW-1185">Reference proteome</keyword>
<keyword id="KW-0677">Repeat</keyword>
<keyword id="KW-0832">Ubl conjugation</keyword>
<organism>
    <name type="scientific">Homo sapiens</name>
    <name type="common">Human</name>
    <dbReference type="NCBI Taxonomy" id="9606"/>
    <lineage>
        <taxon>Eukaryota</taxon>
        <taxon>Metazoa</taxon>
        <taxon>Chordata</taxon>
        <taxon>Craniata</taxon>
        <taxon>Vertebrata</taxon>
        <taxon>Euteleostomi</taxon>
        <taxon>Mammalia</taxon>
        <taxon>Eutheria</taxon>
        <taxon>Euarchontoglires</taxon>
        <taxon>Primates</taxon>
        <taxon>Haplorrhini</taxon>
        <taxon>Catarrhini</taxon>
        <taxon>Hominidae</taxon>
        <taxon>Homo</taxon>
    </lineage>
</organism>
<protein>
    <recommendedName>
        <fullName>Highly divergent homeobox</fullName>
    </recommendedName>
</protein>
<accession>Q7Z353</accession>
<accession>A8K1Y5</accession>
<accession>B7ZL18</accession>
<accession>Q5JZB4</accession>
<accession>Q96NK7</accession>
<sequence>MNLRSVFTVEQQRILQRYYENGMTNQSKNCFQLILQCAQETKLDFSVVRTWVGNKRRKMSSKNSESGTATTGTSLSAPDITVRNVVNIARPSSQQSSWTSANNDVIVTGIYSPASSSSRQGTNKHTDTQITEAHKIPIQKTATKNDTEFQLHIPVQRQVAHCKNASLLLGEKTIILSRQTSVLNAGNSVFNHAKKNYGNSSVQASEMTVPQKPSVCHRPCKIEPVGIQRSYKPEHTGPALHNLCGQKPTIRDPYCRTQNLEIREVFSLAVSDYPQRILGGNAPQKPSSAEGNCLSIAMETGDAEDEYAREEELASMRAQIPSYSRFYESGSSLRAENQSTTLPGPGRNMPNSQMVNIRDMSDNVLYQNRNYHLTPRTSLHTASSTMYSNTNPLRSNFSPHFASSNQLRLSQNQNNYQISGNLTVPWITGCSRKRALQDRTQFSDRDLATLKKYWDNGMTSLGSVCREKIEAVATELNVDCEIVRTWIGNRRRKYRLMGIEVPPPRGGPADFSEQPESGSLSALTPGEEAGPEVGEDNDRNDEVSICLSEGSSQEEPNEVVPNDARAHKEEDHHAVTTDNVKIEIIDDEESDMISNSEVEQVNSFLDYKNEEVKFIENELEIQKQKYFKLQTFVRSLILAMKADDKEQQQALLSDLPPELEEMDFNHASLEPDDTSFSVSSLSEKNVSESL</sequence>
<reference key="1">
    <citation type="journal article" date="2004" name="Nat. Genet.">
        <title>Complete sequencing and characterization of 21,243 full-length human cDNAs.</title>
        <authorList>
            <person name="Ota T."/>
            <person name="Suzuki Y."/>
            <person name="Nishikawa T."/>
            <person name="Otsuki T."/>
            <person name="Sugiyama T."/>
            <person name="Irie R."/>
            <person name="Wakamatsu A."/>
            <person name="Hayashi K."/>
            <person name="Sato H."/>
            <person name="Nagai K."/>
            <person name="Kimura K."/>
            <person name="Makita H."/>
            <person name="Sekine M."/>
            <person name="Obayashi M."/>
            <person name="Nishi T."/>
            <person name="Shibahara T."/>
            <person name="Tanaka T."/>
            <person name="Ishii S."/>
            <person name="Yamamoto J."/>
            <person name="Saito K."/>
            <person name="Kawai Y."/>
            <person name="Isono Y."/>
            <person name="Nakamura Y."/>
            <person name="Nagahari K."/>
            <person name="Murakami K."/>
            <person name="Yasuda T."/>
            <person name="Iwayanagi T."/>
            <person name="Wagatsuma M."/>
            <person name="Shiratori A."/>
            <person name="Sudo H."/>
            <person name="Hosoiri T."/>
            <person name="Kaku Y."/>
            <person name="Kodaira H."/>
            <person name="Kondo H."/>
            <person name="Sugawara M."/>
            <person name="Takahashi M."/>
            <person name="Kanda K."/>
            <person name="Yokoi T."/>
            <person name="Furuya T."/>
            <person name="Kikkawa E."/>
            <person name="Omura Y."/>
            <person name="Abe K."/>
            <person name="Kamihara K."/>
            <person name="Katsuta N."/>
            <person name="Sato K."/>
            <person name="Tanikawa M."/>
            <person name="Yamazaki M."/>
            <person name="Ninomiya K."/>
            <person name="Ishibashi T."/>
            <person name="Yamashita H."/>
            <person name="Murakawa K."/>
            <person name="Fujimori K."/>
            <person name="Tanai H."/>
            <person name="Kimata M."/>
            <person name="Watanabe M."/>
            <person name="Hiraoka S."/>
            <person name="Chiba Y."/>
            <person name="Ishida S."/>
            <person name="Ono Y."/>
            <person name="Takiguchi S."/>
            <person name="Watanabe S."/>
            <person name="Yosida M."/>
            <person name="Hotuta T."/>
            <person name="Kusano J."/>
            <person name="Kanehori K."/>
            <person name="Takahashi-Fujii A."/>
            <person name="Hara H."/>
            <person name="Tanase T.-O."/>
            <person name="Nomura Y."/>
            <person name="Togiya S."/>
            <person name="Komai F."/>
            <person name="Hara R."/>
            <person name="Takeuchi K."/>
            <person name="Arita M."/>
            <person name="Imose N."/>
            <person name="Musashino K."/>
            <person name="Yuuki H."/>
            <person name="Oshima A."/>
            <person name="Sasaki N."/>
            <person name="Aotsuka S."/>
            <person name="Yoshikawa Y."/>
            <person name="Matsunawa H."/>
            <person name="Ichihara T."/>
            <person name="Shiohata N."/>
            <person name="Sano S."/>
            <person name="Moriya S."/>
            <person name="Momiyama H."/>
            <person name="Satoh N."/>
            <person name="Takami S."/>
            <person name="Terashima Y."/>
            <person name="Suzuki O."/>
            <person name="Nakagawa S."/>
            <person name="Senoh A."/>
            <person name="Mizoguchi H."/>
            <person name="Goto Y."/>
            <person name="Shimizu F."/>
            <person name="Wakebe H."/>
            <person name="Hishigaki H."/>
            <person name="Watanabe T."/>
            <person name="Sugiyama A."/>
            <person name="Takemoto M."/>
            <person name="Kawakami B."/>
            <person name="Yamazaki M."/>
            <person name="Watanabe K."/>
            <person name="Kumagai A."/>
            <person name="Itakura S."/>
            <person name="Fukuzumi Y."/>
            <person name="Fujimori Y."/>
            <person name="Komiyama M."/>
            <person name="Tashiro H."/>
            <person name="Tanigami A."/>
            <person name="Fujiwara T."/>
            <person name="Ono T."/>
            <person name="Yamada K."/>
            <person name="Fujii Y."/>
            <person name="Ozaki K."/>
            <person name="Hirao M."/>
            <person name="Ohmori Y."/>
            <person name="Kawabata A."/>
            <person name="Hikiji T."/>
            <person name="Kobatake N."/>
            <person name="Inagaki H."/>
            <person name="Ikema Y."/>
            <person name="Okamoto S."/>
            <person name="Okitani R."/>
            <person name="Kawakami T."/>
            <person name="Noguchi S."/>
            <person name="Itoh T."/>
            <person name="Shigeta K."/>
            <person name="Senba T."/>
            <person name="Matsumura K."/>
            <person name="Nakajima Y."/>
            <person name="Mizuno T."/>
            <person name="Morinaga M."/>
            <person name="Sasaki M."/>
            <person name="Togashi T."/>
            <person name="Oyama M."/>
            <person name="Hata H."/>
            <person name="Watanabe M."/>
            <person name="Komatsu T."/>
            <person name="Mizushima-Sugano J."/>
            <person name="Satoh T."/>
            <person name="Shirai Y."/>
            <person name="Takahashi Y."/>
            <person name="Nakagawa K."/>
            <person name="Okumura K."/>
            <person name="Nagase T."/>
            <person name="Nomura N."/>
            <person name="Kikuchi H."/>
            <person name="Masuho Y."/>
            <person name="Yamashita R."/>
            <person name="Nakai K."/>
            <person name="Yada T."/>
            <person name="Nakamura Y."/>
            <person name="Ohara O."/>
            <person name="Isogai T."/>
            <person name="Sugano S."/>
        </authorList>
    </citation>
    <scope>NUCLEOTIDE SEQUENCE [LARGE SCALE MRNA] (ISOFORMS 1 AND 2)</scope>
    <scope>VARIANT SER-397</scope>
    <source>
        <tissue>Brain</tissue>
        <tissue>Hippocampus</tissue>
    </source>
</reference>
<reference key="2">
    <citation type="journal article" date="2007" name="BMC Genomics">
        <title>The full-ORF clone resource of the German cDNA consortium.</title>
        <authorList>
            <person name="Bechtel S."/>
            <person name="Rosenfelder H."/>
            <person name="Duda A."/>
            <person name="Schmidt C.P."/>
            <person name="Ernst U."/>
            <person name="Wellenreuther R."/>
            <person name="Mehrle A."/>
            <person name="Schuster C."/>
            <person name="Bahr A."/>
            <person name="Bloecker H."/>
            <person name="Heubner D."/>
            <person name="Hoerlein A."/>
            <person name="Michel G."/>
            <person name="Wedler H."/>
            <person name="Koehrer K."/>
            <person name="Ottenwaelder B."/>
            <person name="Poustka A."/>
            <person name="Wiemann S."/>
            <person name="Schupp I."/>
        </authorList>
    </citation>
    <scope>NUCLEOTIDE SEQUENCE [LARGE SCALE MRNA] (ISOFORM 1)</scope>
    <source>
        <tissue>Colon endothelium</tissue>
    </source>
</reference>
<reference key="3">
    <citation type="journal article" date="2005" name="Nature">
        <title>The DNA sequence of the human X chromosome.</title>
        <authorList>
            <person name="Ross M.T."/>
            <person name="Grafham D.V."/>
            <person name="Coffey A.J."/>
            <person name="Scherer S."/>
            <person name="McLay K."/>
            <person name="Muzny D."/>
            <person name="Platzer M."/>
            <person name="Howell G.R."/>
            <person name="Burrows C."/>
            <person name="Bird C.P."/>
            <person name="Frankish A."/>
            <person name="Lovell F.L."/>
            <person name="Howe K.L."/>
            <person name="Ashurst J.L."/>
            <person name="Fulton R.S."/>
            <person name="Sudbrak R."/>
            <person name="Wen G."/>
            <person name="Jones M.C."/>
            <person name="Hurles M.E."/>
            <person name="Andrews T.D."/>
            <person name="Scott C.E."/>
            <person name="Searle S."/>
            <person name="Ramser J."/>
            <person name="Whittaker A."/>
            <person name="Deadman R."/>
            <person name="Carter N.P."/>
            <person name="Hunt S.E."/>
            <person name="Chen R."/>
            <person name="Cree A."/>
            <person name="Gunaratne P."/>
            <person name="Havlak P."/>
            <person name="Hodgson A."/>
            <person name="Metzker M.L."/>
            <person name="Richards S."/>
            <person name="Scott G."/>
            <person name="Steffen D."/>
            <person name="Sodergren E."/>
            <person name="Wheeler D.A."/>
            <person name="Worley K.C."/>
            <person name="Ainscough R."/>
            <person name="Ambrose K.D."/>
            <person name="Ansari-Lari M.A."/>
            <person name="Aradhya S."/>
            <person name="Ashwell R.I."/>
            <person name="Babbage A.K."/>
            <person name="Bagguley C.L."/>
            <person name="Ballabio A."/>
            <person name="Banerjee R."/>
            <person name="Barker G.E."/>
            <person name="Barlow K.F."/>
            <person name="Barrett I.P."/>
            <person name="Bates K.N."/>
            <person name="Beare D.M."/>
            <person name="Beasley H."/>
            <person name="Beasley O."/>
            <person name="Beck A."/>
            <person name="Bethel G."/>
            <person name="Blechschmidt K."/>
            <person name="Brady N."/>
            <person name="Bray-Allen S."/>
            <person name="Bridgeman A.M."/>
            <person name="Brown A.J."/>
            <person name="Brown M.J."/>
            <person name="Bonnin D."/>
            <person name="Bruford E.A."/>
            <person name="Buhay C."/>
            <person name="Burch P."/>
            <person name="Burford D."/>
            <person name="Burgess J."/>
            <person name="Burrill W."/>
            <person name="Burton J."/>
            <person name="Bye J.M."/>
            <person name="Carder C."/>
            <person name="Carrel L."/>
            <person name="Chako J."/>
            <person name="Chapman J.C."/>
            <person name="Chavez D."/>
            <person name="Chen E."/>
            <person name="Chen G."/>
            <person name="Chen Y."/>
            <person name="Chen Z."/>
            <person name="Chinault C."/>
            <person name="Ciccodicola A."/>
            <person name="Clark S.Y."/>
            <person name="Clarke G."/>
            <person name="Clee C.M."/>
            <person name="Clegg S."/>
            <person name="Clerc-Blankenburg K."/>
            <person name="Clifford K."/>
            <person name="Cobley V."/>
            <person name="Cole C.G."/>
            <person name="Conquer J.S."/>
            <person name="Corby N."/>
            <person name="Connor R.E."/>
            <person name="David R."/>
            <person name="Davies J."/>
            <person name="Davis C."/>
            <person name="Davis J."/>
            <person name="Delgado O."/>
            <person name="Deshazo D."/>
            <person name="Dhami P."/>
            <person name="Ding Y."/>
            <person name="Dinh H."/>
            <person name="Dodsworth S."/>
            <person name="Draper H."/>
            <person name="Dugan-Rocha S."/>
            <person name="Dunham A."/>
            <person name="Dunn M."/>
            <person name="Durbin K.J."/>
            <person name="Dutta I."/>
            <person name="Eades T."/>
            <person name="Ellwood M."/>
            <person name="Emery-Cohen A."/>
            <person name="Errington H."/>
            <person name="Evans K.L."/>
            <person name="Faulkner L."/>
            <person name="Francis F."/>
            <person name="Frankland J."/>
            <person name="Fraser A.E."/>
            <person name="Galgoczy P."/>
            <person name="Gilbert J."/>
            <person name="Gill R."/>
            <person name="Gloeckner G."/>
            <person name="Gregory S.G."/>
            <person name="Gribble S."/>
            <person name="Griffiths C."/>
            <person name="Grocock R."/>
            <person name="Gu Y."/>
            <person name="Gwilliam R."/>
            <person name="Hamilton C."/>
            <person name="Hart E.A."/>
            <person name="Hawes A."/>
            <person name="Heath P.D."/>
            <person name="Heitmann K."/>
            <person name="Hennig S."/>
            <person name="Hernandez J."/>
            <person name="Hinzmann B."/>
            <person name="Ho S."/>
            <person name="Hoffs M."/>
            <person name="Howden P.J."/>
            <person name="Huckle E.J."/>
            <person name="Hume J."/>
            <person name="Hunt P.J."/>
            <person name="Hunt A.R."/>
            <person name="Isherwood J."/>
            <person name="Jacob L."/>
            <person name="Johnson D."/>
            <person name="Jones S."/>
            <person name="de Jong P.J."/>
            <person name="Joseph S.S."/>
            <person name="Keenan S."/>
            <person name="Kelly S."/>
            <person name="Kershaw J.K."/>
            <person name="Khan Z."/>
            <person name="Kioschis P."/>
            <person name="Klages S."/>
            <person name="Knights A.J."/>
            <person name="Kosiura A."/>
            <person name="Kovar-Smith C."/>
            <person name="Laird G.K."/>
            <person name="Langford C."/>
            <person name="Lawlor S."/>
            <person name="Leversha M."/>
            <person name="Lewis L."/>
            <person name="Liu W."/>
            <person name="Lloyd C."/>
            <person name="Lloyd D.M."/>
            <person name="Loulseged H."/>
            <person name="Loveland J.E."/>
            <person name="Lovell J.D."/>
            <person name="Lozado R."/>
            <person name="Lu J."/>
            <person name="Lyne R."/>
            <person name="Ma J."/>
            <person name="Maheshwari M."/>
            <person name="Matthews L.H."/>
            <person name="McDowall J."/>
            <person name="McLaren S."/>
            <person name="McMurray A."/>
            <person name="Meidl P."/>
            <person name="Meitinger T."/>
            <person name="Milne S."/>
            <person name="Miner G."/>
            <person name="Mistry S.L."/>
            <person name="Morgan M."/>
            <person name="Morris S."/>
            <person name="Mueller I."/>
            <person name="Mullikin J.C."/>
            <person name="Nguyen N."/>
            <person name="Nordsiek G."/>
            <person name="Nyakatura G."/>
            <person name="O'dell C.N."/>
            <person name="Okwuonu G."/>
            <person name="Palmer S."/>
            <person name="Pandian R."/>
            <person name="Parker D."/>
            <person name="Parrish J."/>
            <person name="Pasternak S."/>
            <person name="Patel D."/>
            <person name="Pearce A.V."/>
            <person name="Pearson D.M."/>
            <person name="Pelan S.E."/>
            <person name="Perez L."/>
            <person name="Porter K.M."/>
            <person name="Ramsey Y."/>
            <person name="Reichwald K."/>
            <person name="Rhodes S."/>
            <person name="Ridler K.A."/>
            <person name="Schlessinger D."/>
            <person name="Schueler M.G."/>
            <person name="Sehra H.K."/>
            <person name="Shaw-Smith C."/>
            <person name="Shen H."/>
            <person name="Sheridan E.M."/>
            <person name="Shownkeen R."/>
            <person name="Skuce C.D."/>
            <person name="Smith M.L."/>
            <person name="Sotheran E.C."/>
            <person name="Steingruber H.E."/>
            <person name="Steward C.A."/>
            <person name="Storey R."/>
            <person name="Swann R.M."/>
            <person name="Swarbreck D."/>
            <person name="Tabor P.E."/>
            <person name="Taudien S."/>
            <person name="Taylor T."/>
            <person name="Teague B."/>
            <person name="Thomas K."/>
            <person name="Thorpe A."/>
            <person name="Timms K."/>
            <person name="Tracey A."/>
            <person name="Trevanion S."/>
            <person name="Tromans A.C."/>
            <person name="d'Urso M."/>
            <person name="Verduzco D."/>
            <person name="Villasana D."/>
            <person name="Waldron L."/>
            <person name="Wall M."/>
            <person name="Wang Q."/>
            <person name="Warren J."/>
            <person name="Warry G.L."/>
            <person name="Wei X."/>
            <person name="West A."/>
            <person name="Whitehead S.L."/>
            <person name="Whiteley M.N."/>
            <person name="Wilkinson J.E."/>
            <person name="Willey D.L."/>
            <person name="Williams G."/>
            <person name="Williams L."/>
            <person name="Williamson A."/>
            <person name="Williamson H."/>
            <person name="Wilming L."/>
            <person name="Woodmansey R.L."/>
            <person name="Wray P.W."/>
            <person name="Yen J."/>
            <person name="Zhang J."/>
            <person name="Zhou J."/>
            <person name="Zoghbi H."/>
            <person name="Zorilla S."/>
            <person name="Buck D."/>
            <person name="Reinhardt R."/>
            <person name="Poustka A."/>
            <person name="Rosenthal A."/>
            <person name="Lehrach H."/>
            <person name="Meindl A."/>
            <person name="Minx P.J."/>
            <person name="Hillier L.W."/>
            <person name="Willard H.F."/>
            <person name="Wilson R.K."/>
            <person name="Waterston R.H."/>
            <person name="Rice C.M."/>
            <person name="Vaudin M."/>
            <person name="Coulson A."/>
            <person name="Nelson D.L."/>
            <person name="Weinstock G."/>
            <person name="Sulston J.E."/>
            <person name="Durbin R.M."/>
            <person name="Hubbard T."/>
            <person name="Gibbs R.A."/>
            <person name="Beck S."/>
            <person name="Rogers J."/>
            <person name="Bentley D.R."/>
        </authorList>
    </citation>
    <scope>NUCLEOTIDE SEQUENCE [LARGE SCALE GENOMIC DNA]</scope>
</reference>
<reference key="4">
    <citation type="submission" date="2005-09" db="EMBL/GenBank/DDBJ databases">
        <authorList>
            <person name="Mural R.J."/>
            <person name="Istrail S."/>
            <person name="Sutton G.G."/>
            <person name="Florea L."/>
            <person name="Halpern A.L."/>
            <person name="Mobarry C.M."/>
            <person name="Lippert R."/>
            <person name="Walenz B."/>
            <person name="Shatkay H."/>
            <person name="Dew I."/>
            <person name="Miller J.R."/>
            <person name="Flanigan M.J."/>
            <person name="Edwards N.J."/>
            <person name="Bolanos R."/>
            <person name="Fasulo D."/>
            <person name="Halldorsson B.V."/>
            <person name="Hannenhalli S."/>
            <person name="Turner R."/>
            <person name="Yooseph S."/>
            <person name="Lu F."/>
            <person name="Nusskern D.R."/>
            <person name="Shue B.C."/>
            <person name="Zheng X.H."/>
            <person name="Zhong F."/>
            <person name="Delcher A.L."/>
            <person name="Huson D.H."/>
            <person name="Kravitz S.A."/>
            <person name="Mouchard L."/>
            <person name="Reinert K."/>
            <person name="Remington K.A."/>
            <person name="Clark A.G."/>
            <person name="Waterman M.S."/>
            <person name="Eichler E.E."/>
            <person name="Adams M.D."/>
            <person name="Hunkapiller M.W."/>
            <person name="Myers E.W."/>
            <person name="Venter J.C."/>
        </authorList>
    </citation>
    <scope>NUCLEOTIDE SEQUENCE [LARGE SCALE GENOMIC DNA]</scope>
</reference>
<reference key="5">
    <citation type="journal article" date="2004" name="Genome Res.">
        <title>The status, quality, and expansion of the NIH full-length cDNA project: the Mammalian Gene Collection (MGC).</title>
        <authorList>
            <consortium name="The MGC Project Team"/>
        </authorList>
    </citation>
    <scope>NUCLEOTIDE SEQUENCE [LARGE SCALE MRNA] (ISOFORM 1)</scope>
    <scope>VARIANT SER-397</scope>
    <source>
        <tissue>Heart</tissue>
        <tissue>Lung</tissue>
    </source>
</reference>
<reference key="6">
    <citation type="submission" date="2008-03" db="UniProtKB">
        <authorList>
            <person name="Bienvenut W.V."/>
            <person name="Vousden K.H."/>
            <person name="Lukashchuk N."/>
        </authorList>
    </citation>
    <scope>PROTEIN SEQUENCE OF 164-194; 257-263; 326-347; 614-623 AND 629-634</scope>
    <scope>IDENTIFICATION BY MASS SPECTROMETRY</scope>
    <source>
        <tissue>Lung carcinoma</tissue>
    </source>
</reference>
<reference key="7">
    <citation type="journal article" date="2017" name="Nat. Struct. Mol. Biol.">
        <title>Site-specific mapping of the human SUMO proteome reveals co-modification with phosphorylation.</title>
        <authorList>
            <person name="Hendriks I.A."/>
            <person name="Lyon D."/>
            <person name="Young C."/>
            <person name="Jensen L.J."/>
            <person name="Vertegaal A.C."/>
            <person name="Nielsen M.L."/>
        </authorList>
    </citation>
    <scope>SUMOYLATION [LARGE SCALE ANALYSIS] AT LYS-135; LYS-140; LYS-144; LYS-163; LYS-172; LYS-194; LYS-212; LYS-221; LYS-232 AND LYS-613</scope>
    <scope>IDENTIFICATION BY MASS SPECTROMETRY [LARGE SCALE ANALYSIS]</scope>
</reference>
<reference key="8">
    <citation type="submission" date="2009-02" db="PDB data bank">
        <title>Solution structure of the homeobox domain of the hypothetical protein, DKFZp686K21156.</title>
        <authorList>
            <consortium name="RIKEN structural genomics initiative (RSGI)"/>
        </authorList>
    </citation>
    <scope>STRUCTURE BY NMR OF 435-501</scope>
</reference>
<gene>
    <name type="primary">HDX</name>
    <name type="synonym">CXorf43</name>
</gene>